<accession>B4EC23</accession>
<name>ISPD_BURCJ</name>
<reference key="1">
    <citation type="journal article" date="2009" name="J. Bacteriol.">
        <title>The genome of Burkholderia cenocepacia J2315, an epidemic pathogen of cystic fibrosis patients.</title>
        <authorList>
            <person name="Holden M.T."/>
            <person name="Seth-Smith H.M."/>
            <person name="Crossman L.C."/>
            <person name="Sebaihia M."/>
            <person name="Bentley S.D."/>
            <person name="Cerdeno-Tarraga A.M."/>
            <person name="Thomson N.R."/>
            <person name="Bason N."/>
            <person name="Quail M.A."/>
            <person name="Sharp S."/>
            <person name="Cherevach I."/>
            <person name="Churcher C."/>
            <person name="Goodhead I."/>
            <person name="Hauser H."/>
            <person name="Holroyd N."/>
            <person name="Mungall K."/>
            <person name="Scott P."/>
            <person name="Walker D."/>
            <person name="White B."/>
            <person name="Rose H."/>
            <person name="Iversen P."/>
            <person name="Mil-Homens D."/>
            <person name="Rocha E.P."/>
            <person name="Fialho A.M."/>
            <person name="Baldwin A."/>
            <person name="Dowson C."/>
            <person name="Barrell B.G."/>
            <person name="Govan J.R."/>
            <person name="Vandamme P."/>
            <person name="Hart C.A."/>
            <person name="Mahenthiralingam E."/>
            <person name="Parkhill J."/>
        </authorList>
    </citation>
    <scope>NUCLEOTIDE SEQUENCE [LARGE SCALE GENOMIC DNA]</scope>
    <source>
        <strain>ATCC BAA-245 / DSM 16553 / LMG 16656 / NCTC 13227 / J2315 / CF5610</strain>
    </source>
</reference>
<keyword id="KW-0414">Isoprene biosynthesis</keyword>
<keyword id="KW-0548">Nucleotidyltransferase</keyword>
<keyword id="KW-0808">Transferase</keyword>
<dbReference type="EC" id="2.7.7.60" evidence="1"/>
<dbReference type="EMBL" id="AM747720">
    <property type="protein sequence ID" value="CAR52316.1"/>
    <property type="molecule type" value="Genomic_DNA"/>
</dbReference>
<dbReference type="RefSeq" id="WP_006488019.1">
    <property type="nucleotide sequence ID" value="NC_011000.1"/>
</dbReference>
<dbReference type="SMR" id="B4EC23"/>
<dbReference type="KEGG" id="bcj:BCAL2016"/>
<dbReference type="eggNOG" id="COG1211">
    <property type="taxonomic scope" value="Bacteria"/>
</dbReference>
<dbReference type="HOGENOM" id="CLU_061281_3_0_4"/>
<dbReference type="BioCyc" id="BCEN216591:G1G1V-2214-MONOMER"/>
<dbReference type="UniPathway" id="UPA00056">
    <property type="reaction ID" value="UER00093"/>
</dbReference>
<dbReference type="Proteomes" id="UP000001035">
    <property type="component" value="Chromosome 1"/>
</dbReference>
<dbReference type="GO" id="GO:0050518">
    <property type="term" value="F:2-C-methyl-D-erythritol 4-phosphate cytidylyltransferase activity"/>
    <property type="evidence" value="ECO:0007669"/>
    <property type="project" value="UniProtKB-UniRule"/>
</dbReference>
<dbReference type="GO" id="GO:0019288">
    <property type="term" value="P:isopentenyl diphosphate biosynthetic process, methylerythritol 4-phosphate pathway"/>
    <property type="evidence" value="ECO:0007669"/>
    <property type="project" value="UniProtKB-UniRule"/>
</dbReference>
<dbReference type="CDD" id="cd02516">
    <property type="entry name" value="CDP-ME_synthetase"/>
    <property type="match status" value="1"/>
</dbReference>
<dbReference type="FunFam" id="3.90.550.10:FF:000003">
    <property type="entry name" value="2-C-methyl-D-erythritol 4-phosphate cytidylyltransferase"/>
    <property type="match status" value="1"/>
</dbReference>
<dbReference type="Gene3D" id="3.90.550.10">
    <property type="entry name" value="Spore Coat Polysaccharide Biosynthesis Protein SpsA, Chain A"/>
    <property type="match status" value="1"/>
</dbReference>
<dbReference type="HAMAP" id="MF_00108">
    <property type="entry name" value="IspD"/>
    <property type="match status" value="1"/>
</dbReference>
<dbReference type="InterPro" id="IPR001228">
    <property type="entry name" value="IspD"/>
</dbReference>
<dbReference type="InterPro" id="IPR034683">
    <property type="entry name" value="IspD/TarI"/>
</dbReference>
<dbReference type="InterPro" id="IPR050088">
    <property type="entry name" value="IspD/TarI_cytidylyltransf_bact"/>
</dbReference>
<dbReference type="InterPro" id="IPR018294">
    <property type="entry name" value="ISPD_synthase_CS"/>
</dbReference>
<dbReference type="InterPro" id="IPR029044">
    <property type="entry name" value="Nucleotide-diphossugar_trans"/>
</dbReference>
<dbReference type="NCBIfam" id="TIGR00453">
    <property type="entry name" value="ispD"/>
    <property type="match status" value="1"/>
</dbReference>
<dbReference type="PANTHER" id="PTHR32125">
    <property type="entry name" value="2-C-METHYL-D-ERYTHRITOL 4-PHOSPHATE CYTIDYLYLTRANSFERASE, CHLOROPLASTIC"/>
    <property type="match status" value="1"/>
</dbReference>
<dbReference type="PANTHER" id="PTHR32125:SF4">
    <property type="entry name" value="2-C-METHYL-D-ERYTHRITOL 4-PHOSPHATE CYTIDYLYLTRANSFERASE, CHLOROPLASTIC"/>
    <property type="match status" value="1"/>
</dbReference>
<dbReference type="Pfam" id="PF01128">
    <property type="entry name" value="IspD"/>
    <property type="match status" value="1"/>
</dbReference>
<dbReference type="SUPFAM" id="SSF53448">
    <property type="entry name" value="Nucleotide-diphospho-sugar transferases"/>
    <property type="match status" value="1"/>
</dbReference>
<dbReference type="PROSITE" id="PS01295">
    <property type="entry name" value="ISPD"/>
    <property type="match status" value="1"/>
</dbReference>
<comment type="function">
    <text evidence="1">Catalyzes the formation of 4-diphosphocytidyl-2-C-methyl-D-erythritol from CTP and 2-C-methyl-D-erythritol 4-phosphate (MEP).</text>
</comment>
<comment type="catalytic activity">
    <reaction evidence="1">
        <text>2-C-methyl-D-erythritol 4-phosphate + CTP + H(+) = 4-CDP-2-C-methyl-D-erythritol + diphosphate</text>
        <dbReference type="Rhea" id="RHEA:13429"/>
        <dbReference type="ChEBI" id="CHEBI:15378"/>
        <dbReference type="ChEBI" id="CHEBI:33019"/>
        <dbReference type="ChEBI" id="CHEBI:37563"/>
        <dbReference type="ChEBI" id="CHEBI:57823"/>
        <dbReference type="ChEBI" id="CHEBI:58262"/>
        <dbReference type="EC" id="2.7.7.60"/>
    </reaction>
</comment>
<comment type="pathway">
    <text evidence="1">Isoprenoid biosynthesis; isopentenyl diphosphate biosynthesis via DXP pathway; isopentenyl diphosphate from 1-deoxy-D-xylulose 5-phosphate: step 2/6.</text>
</comment>
<comment type="similarity">
    <text evidence="1">Belongs to the IspD/TarI cytidylyltransferase family. IspD subfamily.</text>
</comment>
<evidence type="ECO:0000255" key="1">
    <source>
        <dbReference type="HAMAP-Rule" id="MF_00108"/>
    </source>
</evidence>
<organism>
    <name type="scientific">Burkholderia cenocepacia (strain ATCC BAA-245 / DSM 16553 / LMG 16656 / NCTC 13227 / J2315 / CF5610)</name>
    <name type="common">Burkholderia cepacia (strain J2315)</name>
    <dbReference type="NCBI Taxonomy" id="216591"/>
    <lineage>
        <taxon>Bacteria</taxon>
        <taxon>Pseudomonadati</taxon>
        <taxon>Pseudomonadota</taxon>
        <taxon>Betaproteobacteria</taxon>
        <taxon>Burkholderiales</taxon>
        <taxon>Burkholderiaceae</taxon>
        <taxon>Burkholderia</taxon>
        <taxon>Burkholderia cepacia complex</taxon>
    </lineage>
</organism>
<gene>
    <name evidence="1" type="primary">ispD</name>
    <name type="ordered locus">BceJ2315_19790</name>
    <name type="ORF">BCAL2016</name>
</gene>
<sequence length="236" mass="25439">MTPRLFALIPCAGTGSRSGSAVPKQYRTLAGRALLHYTLAAFDACTEFAQTLVVLAPDDSHFDARRFAGLRFAVRRCGGGSRQASVLNGLLELAEFGATDHDWVLVHDAARPGITPELIRTLVATLKDDPVGGIVALPVADTLKRVPAGGDAIARTESRDALWQAQTPQMFRIGMLREAILRAQREGHDLTDEASAIEWAGHTPRVVQGSLRNFKVTYPEDFALAEAILARPANAS</sequence>
<protein>
    <recommendedName>
        <fullName evidence="1">2-C-methyl-D-erythritol 4-phosphate cytidylyltransferase</fullName>
        <ecNumber evidence="1">2.7.7.60</ecNumber>
    </recommendedName>
    <alternativeName>
        <fullName evidence="1">4-diphosphocytidyl-2C-methyl-D-erythritol synthase</fullName>
    </alternativeName>
    <alternativeName>
        <fullName evidence="1">MEP cytidylyltransferase</fullName>
        <shortName evidence="1">MCT</shortName>
    </alternativeName>
</protein>
<proteinExistence type="inferred from homology"/>
<feature type="chain" id="PRO_1000094312" description="2-C-methyl-D-erythritol 4-phosphate cytidylyltransferase">
    <location>
        <begin position="1"/>
        <end position="236"/>
    </location>
</feature>
<feature type="site" description="Transition state stabilizer" evidence="1">
    <location>
        <position position="17"/>
    </location>
</feature>
<feature type="site" description="Transition state stabilizer" evidence="1">
    <location>
        <position position="24"/>
    </location>
</feature>
<feature type="site" description="Positions MEP for the nucleophilic attack" evidence="1">
    <location>
        <position position="159"/>
    </location>
</feature>
<feature type="site" description="Positions MEP for the nucleophilic attack" evidence="1">
    <location>
        <position position="215"/>
    </location>
</feature>